<protein>
    <recommendedName>
        <fullName evidence="1">Acetyl-coenzyme A carboxylase carboxyl transferase subunit beta</fullName>
        <shortName evidence="1">ACCase subunit beta</shortName>
        <shortName evidence="1">Acetyl-CoA carboxylase carboxyltransferase subunit beta</shortName>
        <ecNumber evidence="1">2.1.3.15</ecNumber>
    </recommendedName>
</protein>
<sequence length="288" mass="31885">MVLEIFRKPKYVTVRPEKTETTQGNERRDIPEGLWVKCSRCNEILYTKELDKNFKVCHKCNFHFRLNAQERIHMTLDEGSFQERDNELITLNPLNFPDYQEKIQSAQKATELKEAVVTGEGTIGGNPVVIGVMDSHFIMGSMGSVVGEKIARAIERAIEKKLPVVLFSTSGGARMQEGILSLMQMAKTAAALAKLDEAGLLYVAVLTDPTTGGVTASFASLGDIIIAEPGALIGFTGPRVIEQTIRQKLPEGFQRAEFLRKHGMVDMIVNRPQLKDTLANILSLHGTN</sequence>
<proteinExistence type="inferred from homology"/>
<evidence type="ECO:0000255" key="1">
    <source>
        <dbReference type="HAMAP-Rule" id="MF_01395"/>
    </source>
</evidence>
<evidence type="ECO:0000255" key="2">
    <source>
        <dbReference type="PROSITE-ProRule" id="PRU01136"/>
    </source>
</evidence>
<organism>
    <name type="scientific">Desulforamulus reducens (strain ATCC BAA-1160 / DSM 100696 / MI-1)</name>
    <name type="common">Desulfotomaculum reducens</name>
    <dbReference type="NCBI Taxonomy" id="349161"/>
    <lineage>
        <taxon>Bacteria</taxon>
        <taxon>Bacillati</taxon>
        <taxon>Bacillota</taxon>
        <taxon>Clostridia</taxon>
        <taxon>Eubacteriales</taxon>
        <taxon>Peptococcaceae</taxon>
        <taxon>Desulforamulus</taxon>
    </lineage>
</organism>
<dbReference type="EC" id="2.1.3.15" evidence="1"/>
<dbReference type="EMBL" id="CP000612">
    <property type="protein sequence ID" value="ABO50825.1"/>
    <property type="molecule type" value="Genomic_DNA"/>
</dbReference>
<dbReference type="RefSeq" id="WP_011878623.1">
    <property type="nucleotide sequence ID" value="NC_009253.1"/>
</dbReference>
<dbReference type="SMR" id="A4J6X2"/>
<dbReference type="STRING" id="349161.Dred_2315"/>
<dbReference type="KEGG" id="drm:Dred_2315"/>
<dbReference type="eggNOG" id="COG0777">
    <property type="taxonomic scope" value="Bacteria"/>
</dbReference>
<dbReference type="HOGENOM" id="CLU_015486_1_0_9"/>
<dbReference type="OrthoDB" id="9772975at2"/>
<dbReference type="UniPathway" id="UPA00655">
    <property type="reaction ID" value="UER00711"/>
</dbReference>
<dbReference type="Proteomes" id="UP000001556">
    <property type="component" value="Chromosome"/>
</dbReference>
<dbReference type="GO" id="GO:0009317">
    <property type="term" value="C:acetyl-CoA carboxylase complex"/>
    <property type="evidence" value="ECO:0007669"/>
    <property type="project" value="InterPro"/>
</dbReference>
<dbReference type="GO" id="GO:0003989">
    <property type="term" value="F:acetyl-CoA carboxylase activity"/>
    <property type="evidence" value="ECO:0007669"/>
    <property type="project" value="InterPro"/>
</dbReference>
<dbReference type="GO" id="GO:0005524">
    <property type="term" value="F:ATP binding"/>
    <property type="evidence" value="ECO:0007669"/>
    <property type="project" value="UniProtKB-KW"/>
</dbReference>
<dbReference type="GO" id="GO:0016743">
    <property type="term" value="F:carboxyl- or carbamoyltransferase activity"/>
    <property type="evidence" value="ECO:0007669"/>
    <property type="project" value="UniProtKB-UniRule"/>
</dbReference>
<dbReference type="GO" id="GO:0008270">
    <property type="term" value="F:zinc ion binding"/>
    <property type="evidence" value="ECO:0007669"/>
    <property type="project" value="UniProtKB-UniRule"/>
</dbReference>
<dbReference type="GO" id="GO:0006633">
    <property type="term" value="P:fatty acid biosynthetic process"/>
    <property type="evidence" value="ECO:0007669"/>
    <property type="project" value="UniProtKB-KW"/>
</dbReference>
<dbReference type="GO" id="GO:2001295">
    <property type="term" value="P:malonyl-CoA biosynthetic process"/>
    <property type="evidence" value="ECO:0007669"/>
    <property type="project" value="UniProtKB-UniRule"/>
</dbReference>
<dbReference type="Gene3D" id="3.90.226.10">
    <property type="entry name" value="2-enoyl-CoA Hydratase, Chain A, domain 1"/>
    <property type="match status" value="1"/>
</dbReference>
<dbReference type="HAMAP" id="MF_01395">
    <property type="entry name" value="AcetylCoA_CT_beta"/>
    <property type="match status" value="1"/>
</dbReference>
<dbReference type="InterPro" id="IPR034733">
    <property type="entry name" value="AcCoA_carboxyl_beta"/>
</dbReference>
<dbReference type="InterPro" id="IPR000438">
    <property type="entry name" value="Acetyl_CoA_COase_Trfase_b_su"/>
</dbReference>
<dbReference type="InterPro" id="IPR029045">
    <property type="entry name" value="ClpP/crotonase-like_dom_sf"/>
</dbReference>
<dbReference type="InterPro" id="IPR011762">
    <property type="entry name" value="COA_CT_N"/>
</dbReference>
<dbReference type="InterPro" id="IPR041010">
    <property type="entry name" value="Znf-ACC"/>
</dbReference>
<dbReference type="NCBIfam" id="TIGR00515">
    <property type="entry name" value="accD"/>
    <property type="match status" value="1"/>
</dbReference>
<dbReference type="PANTHER" id="PTHR42995">
    <property type="entry name" value="ACETYL-COENZYME A CARBOXYLASE CARBOXYL TRANSFERASE SUBUNIT BETA, CHLOROPLASTIC"/>
    <property type="match status" value="1"/>
</dbReference>
<dbReference type="PANTHER" id="PTHR42995:SF5">
    <property type="entry name" value="ACETYL-COENZYME A CARBOXYLASE CARBOXYL TRANSFERASE SUBUNIT BETA, CHLOROPLASTIC"/>
    <property type="match status" value="1"/>
</dbReference>
<dbReference type="Pfam" id="PF01039">
    <property type="entry name" value="Carboxyl_trans"/>
    <property type="match status" value="1"/>
</dbReference>
<dbReference type="Pfam" id="PF17848">
    <property type="entry name" value="Zn_ribbon_ACC"/>
    <property type="match status" value="1"/>
</dbReference>
<dbReference type="PRINTS" id="PR01070">
    <property type="entry name" value="ACCCTRFRASEB"/>
</dbReference>
<dbReference type="SUPFAM" id="SSF52096">
    <property type="entry name" value="ClpP/crotonase"/>
    <property type="match status" value="1"/>
</dbReference>
<dbReference type="PROSITE" id="PS50980">
    <property type="entry name" value="COA_CT_NTER"/>
    <property type="match status" value="1"/>
</dbReference>
<feature type="chain" id="PRO_0000389734" description="Acetyl-coenzyme A carboxylase carboxyl transferase subunit beta">
    <location>
        <begin position="1"/>
        <end position="288"/>
    </location>
</feature>
<feature type="domain" description="CoA carboxyltransferase N-terminal" evidence="2">
    <location>
        <begin position="34"/>
        <end position="288"/>
    </location>
</feature>
<feature type="zinc finger region" description="C4-type" evidence="1">
    <location>
        <begin position="38"/>
        <end position="60"/>
    </location>
</feature>
<feature type="binding site" evidence="1">
    <location>
        <position position="38"/>
    </location>
    <ligand>
        <name>Zn(2+)</name>
        <dbReference type="ChEBI" id="CHEBI:29105"/>
    </ligand>
</feature>
<feature type="binding site" evidence="1">
    <location>
        <position position="41"/>
    </location>
    <ligand>
        <name>Zn(2+)</name>
        <dbReference type="ChEBI" id="CHEBI:29105"/>
    </ligand>
</feature>
<feature type="binding site" evidence="1">
    <location>
        <position position="57"/>
    </location>
    <ligand>
        <name>Zn(2+)</name>
        <dbReference type="ChEBI" id="CHEBI:29105"/>
    </ligand>
</feature>
<feature type="binding site" evidence="1">
    <location>
        <position position="60"/>
    </location>
    <ligand>
        <name>Zn(2+)</name>
        <dbReference type="ChEBI" id="CHEBI:29105"/>
    </ligand>
</feature>
<gene>
    <name evidence="1" type="primary">accD</name>
    <name type="ordered locus">Dred_2315</name>
</gene>
<accession>A4J6X2</accession>
<keyword id="KW-0067">ATP-binding</keyword>
<keyword id="KW-0963">Cytoplasm</keyword>
<keyword id="KW-0275">Fatty acid biosynthesis</keyword>
<keyword id="KW-0276">Fatty acid metabolism</keyword>
<keyword id="KW-0444">Lipid biosynthesis</keyword>
<keyword id="KW-0443">Lipid metabolism</keyword>
<keyword id="KW-0479">Metal-binding</keyword>
<keyword id="KW-0547">Nucleotide-binding</keyword>
<keyword id="KW-1185">Reference proteome</keyword>
<keyword id="KW-0808">Transferase</keyword>
<keyword id="KW-0862">Zinc</keyword>
<keyword id="KW-0863">Zinc-finger</keyword>
<comment type="function">
    <text evidence="1">Component of the acetyl coenzyme A carboxylase (ACC) complex. Biotin carboxylase (BC) catalyzes the carboxylation of biotin on its carrier protein (BCCP) and then the CO(2) group is transferred by the transcarboxylase to acetyl-CoA to form malonyl-CoA.</text>
</comment>
<comment type="catalytic activity">
    <reaction evidence="1">
        <text>N(6)-carboxybiotinyl-L-lysyl-[protein] + acetyl-CoA = N(6)-biotinyl-L-lysyl-[protein] + malonyl-CoA</text>
        <dbReference type="Rhea" id="RHEA:54728"/>
        <dbReference type="Rhea" id="RHEA-COMP:10505"/>
        <dbReference type="Rhea" id="RHEA-COMP:10506"/>
        <dbReference type="ChEBI" id="CHEBI:57288"/>
        <dbReference type="ChEBI" id="CHEBI:57384"/>
        <dbReference type="ChEBI" id="CHEBI:83144"/>
        <dbReference type="ChEBI" id="CHEBI:83145"/>
        <dbReference type="EC" id="2.1.3.15"/>
    </reaction>
</comment>
<comment type="cofactor">
    <cofactor evidence="1">
        <name>Zn(2+)</name>
        <dbReference type="ChEBI" id="CHEBI:29105"/>
    </cofactor>
    <text evidence="1">Binds 1 zinc ion per subunit.</text>
</comment>
<comment type="pathway">
    <text evidence="1">Lipid metabolism; malonyl-CoA biosynthesis; malonyl-CoA from acetyl-CoA: step 1/1.</text>
</comment>
<comment type="subunit">
    <text evidence="1">Acetyl-CoA carboxylase is a heterohexamer composed of biotin carboxyl carrier protein (AccB), biotin carboxylase (AccC) and two subunits each of ACCase subunit alpha (AccA) and ACCase subunit beta (AccD).</text>
</comment>
<comment type="subcellular location">
    <subcellularLocation>
        <location evidence="1">Cytoplasm</location>
    </subcellularLocation>
</comment>
<comment type="similarity">
    <text evidence="1">Belongs to the AccD/PCCB family.</text>
</comment>
<name>ACCD_DESRM</name>
<reference key="1">
    <citation type="submission" date="2007-03" db="EMBL/GenBank/DDBJ databases">
        <title>Complete sequence of Desulfotomaculum reducens MI-1.</title>
        <authorList>
            <consortium name="US DOE Joint Genome Institute"/>
            <person name="Copeland A."/>
            <person name="Lucas S."/>
            <person name="Lapidus A."/>
            <person name="Barry K."/>
            <person name="Detter J.C."/>
            <person name="Glavina del Rio T."/>
            <person name="Hammon N."/>
            <person name="Israni S."/>
            <person name="Dalin E."/>
            <person name="Tice H."/>
            <person name="Pitluck S."/>
            <person name="Sims D."/>
            <person name="Brettin T."/>
            <person name="Bruce D."/>
            <person name="Han C."/>
            <person name="Tapia R."/>
            <person name="Schmutz J."/>
            <person name="Larimer F."/>
            <person name="Land M."/>
            <person name="Hauser L."/>
            <person name="Kyrpides N."/>
            <person name="Kim E."/>
            <person name="Tebo B.M."/>
            <person name="Richardson P."/>
        </authorList>
    </citation>
    <scope>NUCLEOTIDE SEQUENCE [LARGE SCALE GENOMIC DNA]</scope>
    <source>
        <strain>ATCC BAA-1160 / DSM 100696 / MI-1</strain>
    </source>
</reference>